<gene>
    <name evidence="1" type="primary">atpA</name>
    <name type="ordered locus">WIGBR0060</name>
</gene>
<proteinExistence type="inferred from homology"/>
<accession>Q8D3J5</accession>
<dbReference type="EC" id="7.1.2.2" evidence="1"/>
<dbReference type="EMBL" id="BA000021">
    <property type="protein sequence ID" value="BAC24152.1"/>
    <property type="molecule type" value="Genomic_DNA"/>
</dbReference>
<dbReference type="SMR" id="Q8D3J5"/>
<dbReference type="STRING" id="36870.gene:10368484"/>
<dbReference type="KEGG" id="wbr:atpA"/>
<dbReference type="eggNOG" id="COG0056">
    <property type="taxonomic scope" value="Bacteria"/>
</dbReference>
<dbReference type="HOGENOM" id="CLU_010091_2_1_6"/>
<dbReference type="OrthoDB" id="9803053at2"/>
<dbReference type="Proteomes" id="UP000000562">
    <property type="component" value="Chromosome"/>
</dbReference>
<dbReference type="GO" id="GO:0005886">
    <property type="term" value="C:plasma membrane"/>
    <property type="evidence" value="ECO:0007669"/>
    <property type="project" value="UniProtKB-SubCell"/>
</dbReference>
<dbReference type="GO" id="GO:0045259">
    <property type="term" value="C:proton-transporting ATP synthase complex"/>
    <property type="evidence" value="ECO:0007669"/>
    <property type="project" value="UniProtKB-KW"/>
</dbReference>
<dbReference type="GO" id="GO:0043531">
    <property type="term" value="F:ADP binding"/>
    <property type="evidence" value="ECO:0007669"/>
    <property type="project" value="TreeGrafter"/>
</dbReference>
<dbReference type="GO" id="GO:0005524">
    <property type="term" value="F:ATP binding"/>
    <property type="evidence" value="ECO:0007669"/>
    <property type="project" value="UniProtKB-UniRule"/>
</dbReference>
<dbReference type="GO" id="GO:0046933">
    <property type="term" value="F:proton-transporting ATP synthase activity, rotational mechanism"/>
    <property type="evidence" value="ECO:0007669"/>
    <property type="project" value="UniProtKB-UniRule"/>
</dbReference>
<dbReference type="CDD" id="cd18113">
    <property type="entry name" value="ATP-synt_F1_alpha_C"/>
    <property type="match status" value="1"/>
</dbReference>
<dbReference type="CDD" id="cd01132">
    <property type="entry name" value="F1-ATPase_alpha_CD"/>
    <property type="match status" value="1"/>
</dbReference>
<dbReference type="FunFam" id="1.20.150.20:FF:000001">
    <property type="entry name" value="ATP synthase subunit alpha"/>
    <property type="match status" value="1"/>
</dbReference>
<dbReference type="FunFam" id="2.40.30.20:FF:000001">
    <property type="entry name" value="ATP synthase subunit alpha"/>
    <property type="match status" value="1"/>
</dbReference>
<dbReference type="FunFam" id="3.40.50.300:FF:000002">
    <property type="entry name" value="ATP synthase subunit alpha"/>
    <property type="match status" value="1"/>
</dbReference>
<dbReference type="Gene3D" id="2.40.30.20">
    <property type="match status" value="1"/>
</dbReference>
<dbReference type="Gene3D" id="1.20.150.20">
    <property type="entry name" value="ATP synthase alpha/beta chain, C-terminal domain"/>
    <property type="match status" value="1"/>
</dbReference>
<dbReference type="Gene3D" id="3.40.50.300">
    <property type="entry name" value="P-loop containing nucleotide triphosphate hydrolases"/>
    <property type="match status" value="1"/>
</dbReference>
<dbReference type="HAMAP" id="MF_01346">
    <property type="entry name" value="ATP_synth_alpha_bact"/>
    <property type="match status" value="1"/>
</dbReference>
<dbReference type="InterPro" id="IPR023366">
    <property type="entry name" value="ATP_synth_asu-like_sf"/>
</dbReference>
<dbReference type="InterPro" id="IPR000793">
    <property type="entry name" value="ATP_synth_asu_C"/>
</dbReference>
<dbReference type="InterPro" id="IPR038376">
    <property type="entry name" value="ATP_synth_asu_C_sf"/>
</dbReference>
<dbReference type="InterPro" id="IPR033732">
    <property type="entry name" value="ATP_synth_F1_a_nt-bd_dom"/>
</dbReference>
<dbReference type="InterPro" id="IPR005294">
    <property type="entry name" value="ATP_synth_F1_asu"/>
</dbReference>
<dbReference type="InterPro" id="IPR020003">
    <property type="entry name" value="ATPase_a/bsu_AS"/>
</dbReference>
<dbReference type="InterPro" id="IPR004100">
    <property type="entry name" value="ATPase_F1/V1/A1_a/bsu_N"/>
</dbReference>
<dbReference type="InterPro" id="IPR036121">
    <property type="entry name" value="ATPase_F1/V1/A1_a/bsu_N_sf"/>
</dbReference>
<dbReference type="InterPro" id="IPR000194">
    <property type="entry name" value="ATPase_F1/V1/A1_a/bsu_nucl-bd"/>
</dbReference>
<dbReference type="InterPro" id="IPR027417">
    <property type="entry name" value="P-loop_NTPase"/>
</dbReference>
<dbReference type="NCBIfam" id="TIGR00962">
    <property type="entry name" value="atpA"/>
    <property type="match status" value="1"/>
</dbReference>
<dbReference type="NCBIfam" id="NF009884">
    <property type="entry name" value="PRK13343.1"/>
    <property type="match status" value="1"/>
</dbReference>
<dbReference type="PANTHER" id="PTHR48082">
    <property type="entry name" value="ATP SYNTHASE SUBUNIT ALPHA, MITOCHONDRIAL"/>
    <property type="match status" value="1"/>
</dbReference>
<dbReference type="PANTHER" id="PTHR48082:SF2">
    <property type="entry name" value="ATP SYNTHASE SUBUNIT ALPHA, MITOCHONDRIAL"/>
    <property type="match status" value="1"/>
</dbReference>
<dbReference type="Pfam" id="PF00006">
    <property type="entry name" value="ATP-synt_ab"/>
    <property type="match status" value="1"/>
</dbReference>
<dbReference type="Pfam" id="PF00306">
    <property type="entry name" value="ATP-synt_ab_C"/>
    <property type="match status" value="1"/>
</dbReference>
<dbReference type="Pfam" id="PF02874">
    <property type="entry name" value="ATP-synt_ab_N"/>
    <property type="match status" value="1"/>
</dbReference>
<dbReference type="SUPFAM" id="SSF47917">
    <property type="entry name" value="C-terminal domain of alpha and beta subunits of F1 ATP synthase"/>
    <property type="match status" value="1"/>
</dbReference>
<dbReference type="SUPFAM" id="SSF50615">
    <property type="entry name" value="N-terminal domain of alpha and beta subunits of F1 ATP synthase"/>
    <property type="match status" value="1"/>
</dbReference>
<dbReference type="SUPFAM" id="SSF52540">
    <property type="entry name" value="P-loop containing nucleoside triphosphate hydrolases"/>
    <property type="match status" value="1"/>
</dbReference>
<dbReference type="PROSITE" id="PS00152">
    <property type="entry name" value="ATPASE_ALPHA_BETA"/>
    <property type="match status" value="1"/>
</dbReference>
<reference key="1">
    <citation type="journal article" date="2002" name="Nat. Genet.">
        <title>Genome sequence of the endocellular obligate symbiont of tsetse flies, Wigglesworthia glossinidia.</title>
        <authorList>
            <person name="Akman L."/>
            <person name="Yamashita A."/>
            <person name="Watanabe H."/>
            <person name="Oshima K."/>
            <person name="Shiba T."/>
            <person name="Hattori M."/>
            <person name="Aksoy S."/>
        </authorList>
    </citation>
    <scope>NUCLEOTIDE SEQUENCE [LARGE SCALE GENOMIC DNA]</scope>
</reference>
<feature type="chain" id="PRO_0000238398" description="ATP synthase subunit alpha">
    <location>
        <begin position="1"/>
        <end position="510"/>
    </location>
</feature>
<feature type="binding site" evidence="1">
    <location>
        <begin position="169"/>
        <end position="176"/>
    </location>
    <ligand>
        <name>ATP</name>
        <dbReference type="ChEBI" id="CHEBI:30616"/>
    </ligand>
</feature>
<feature type="site" description="Required for activity" evidence="1">
    <location>
        <position position="373"/>
    </location>
</feature>
<protein>
    <recommendedName>
        <fullName evidence="1">ATP synthase subunit alpha</fullName>
        <ecNumber evidence="1">7.1.2.2</ecNumber>
    </recommendedName>
    <alternativeName>
        <fullName evidence="1">ATP synthase F1 sector subunit alpha</fullName>
    </alternativeName>
    <alternativeName>
        <fullName evidence="1">F-ATPase subunit alpha</fullName>
    </alternativeName>
</protein>
<organism>
    <name type="scientific">Wigglesworthia glossinidia brevipalpis</name>
    <dbReference type="NCBI Taxonomy" id="36870"/>
    <lineage>
        <taxon>Bacteria</taxon>
        <taxon>Pseudomonadati</taxon>
        <taxon>Pseudomonadota</taxon>
        <taxon>Gammaproteobacteria</taxon>
        <taxon>Enterobacterales</taxon>
        <taxon>Erwiniaceae</taxon>
        <taxon>Wigglesworthia</taxon>
    </lineage>
</organism>
<keyword id="KW-0066">ATP synthesis</keyword>
<keyword id="KW-0067">ATP-binding</keyword>
<keyword id="KW-1003">Cell membrane</keyword>
<keyword id="KW-0139">CF(1)</keyword>
<keyword id="KW-0375">Hydrogen ion transport</keyword>
<keyword id="KW-0406">Ion transport</keyword>
<keyword id="KW-0472">Membrane</keyword>
<keyword id="KW-0547">Nucleotide-binding</keyword>
<keyword id="KW-1185">Reference proteome</keyword>
<keyword id="KW-1278">Translocase</keyword>
<keyword id="KW-0813">Transport</keyword>
<comment type="function">
    <text evidence="1">Produces ATP from ADP in the presence of a proton gradient across the membrane. The alpha chain is a regulatory subunit.</text>
</comment>
<comment type="catalytic activity">
    <reaction evidence="1">
        <text>ATP + H2O + 4 H(+)(in) = ADP + phosphate + 5 H(+)(out)</text>
        <dbReference type="Rhea" id="RHEA:57720"/>
        <dbReference type="ChEBI" id="CHEBI:15377"/>
        <dbReference type="ChEBI" id="CHEBI:15378"/>
        <dbReference type="ChEBI" id="CHEBI:30616"/>
        <dbReference type="ChEBI" id="CHEBI:43474"/>
        <dbReference type="ChEBI" id="CHEBI:456216"/>
        <dbReference type="EC" id="7.1.2.2"/>
    </reaction>
</comment>
<comment type="subunit">
    <text evidence="1">F-type ATPases have 2 components, CF(1) - the catalytic core - and CF(0) - the membrane proton channel. CF(1) has five subunits: alpha(3), beta(3), gamma(1), delta(1), epsilon(1). CF(0) has three main subunits: a(1), b(2) and c(9-12). The alpha and beta chains form an alternating ring which encloses part of the gamma chain. CF(1) is attached to CF(0) by a central stalk formed by the gamma and epsilon chains, while a peripheral stalk is formed by the delta and b chains.</text>
</comment>
<comment type="subcellular location">
    <subcellularLocation>
        <location evidence="1">Cell membrane</location>
        <topology evidence="1">Peripheral membrane protein</topology>
    </subcellularLocation>
</comment>
<comment type="similarity">
    <text evidence="1">Belongs to the ATPase alpha/beta chains family.</text>
</comment>
<evidence type="ECO:0000255" key="1">
    <source>
        <dbReference type="HAMAP-Rule" id="MF_01346"/>
    </source>
</evidence>
<name>ATPA_WIGBR</name>
<sequence length="510" mass="56996">MQLRSSEISELIKYRISKFNAESEMQDEGIIISISDGIIKIYGLNNIMQNEMIKLPEKTFAIALNLEKEIVGAVVMGSYFHLSEGMKVYSTGRILEVPTGNNLLGRVLNALGEPLDSKGDILHDCFSPIETIAPGVIDRLSINEPLQTGYKSIDSMVPIGKGQRELIIGDRQTGKSSLAIDTIINQKDSNIKCIYVSIGQKFSTVVKTVEKLKEHDALSNTIIVCATASDSAVLQYLAPYSGCTMGEYFRDRGEDSLIVYDDLSKQAIAYRQISLLLRRPPGREAYPGDIFYLHSRLLERSARVNEIYVENFTKGKVKNKSGSLTALPIVETQGGDISSFVPTNLISITDGQIFLESNLFNSGIRPAINPGISVSRVGGSAQTEIIRKLSGNIRTSLAQYNELSSFAQFSSDLDDSTKKQLQHGEKIIEILKQKQYSPMSLSKQALLLFAVQNKYLDKIKSSEVEKYENSLLKHAEKKYSNYMEKINKSYIYDDFVIKKLKKIMDSFEFF</sequence>